<sequence>MMTTSLIWGIAIAACCCLWLILGIRRRQTGEPPLENGLIPYLGCALQFGANPLEFLRANQRKHGHVFTCKLMGKYVHFITNPLSYHKVLCHGKYFDWKKFHFATSAKAFGHRSIDPMDGNTTENINDTFIKTLQGHALNSLTESMMENLQRIMRPPVSSNSKTAAWVTEGMYSFCYRVMFEAGYLTIFGRDLTRRDTQKAHILNNLDNFKQFDKVFPALVAGLPIHMFRTAHNAREKLAESLRHENLQKRESISELISLRMFLNDTLSTFDDLEKAKTHLVVLWASQANTIPATFWSLFQMIRNPEAMKAATEEVKRTLENAGQKVSLEGNPICLSQAELNDLPVLDSIIKESLRLSSASLNIRTAKEDFTLHLEDGSYNIRKDDIIALYPQLMHLDPEIYPDPLTFKYDRYLDENGKTKTTFYCNGLKLKYYYMPFGSGATICPGRLFAIHEIKQFLILMLSYFELELIEGQAKCPPLDQSRAGLGILPPLNDIEFKYKFKHL</sequence>
<evidence type="ECO:0000255" key="1"/>
<evidence type="ECO:0000269" key="2">
    <source>
    </source>
</evidence>
<evidence type="ECO:0000269" key="3">
    <source>
    </source>
</evidence>
<evidence type="ECO:0000269" key="4">
    <source>
    </source>
</evidence>
<evidence type="ECO:0000269" key="5">
    <source>
    </source>
</evidence>
<evidence type="ECO:0000269" key="6">
    <source>
    </source>
</evidence>
<evidence type="ECO:0000269" key="7">
    <source>
    </source>
</evidence>
<evidence type="ECO:0000269" key="8">
    <source>
    </source>
</evidence>
<evidence type="ECO:0000269" key="9">
    <source>
    </source>
</evidence>
<evidence type="ECO:0000269" key="10">
    <source ref="12"/>
</evidence>
<evidence type="ECO:0000303" key="11">
    <source>
    </source>
</evidence>
<evidence type="ECO:0000303" key="12">
    <source>
    </source>
</evidence>
<evidence type="ECO:0000303" key="13">
    <source>
    </source>
</evidence>
<evidence type="ECO:0000305" key="14"/>
<evidence type="ECO:0000305" key="15">
    <source>
    </source>
</evidence>
<evidence type="ECO:0000305" key="16">
    <source>
    </source>
</evidence>
<evidence type="ECO:0000305" key="17">
    <source>
    </source>
</evidence>
<evidence type="ECO:0000305" key="18">
    <source>
    </source>
</evidence>
<evidence type="ECO:0000312" key="19">
    <source>
        <dbReference type="HGNC" id="HGNC:2651"/>
    </source>
</evidence>
<evidence type="ECO:0007744" key="20">
    <source>
        <dbReference type="PDB" id="3DAX"/>
    </source>
</evidence>
<evidence type="ECO:0007829" key="21">
    <source>
        <dbReference type="PDB" id="3DAX"/>
    </source>
</evidence>
<evidence type="ECO:0007829" key="22">
    <source>
        <dbReference type="PDB" id="3V8D"/>
    </source>
</evidence>
<dbReference type="EC" id="1.14.14.26" evidence="2"/>
<dbReference type="EC" id="1.14.14.23" evidence="9"/>
<dbReference type="EMBL" id="X56088">
    <property type="protein sequence ID" value="CAA39568.1"/>
    <property type="molecule type" value="mRNA"/>
</dbReference>
<dbReference type="EMBL" id="M93133">
    <property type="protein sequence ID" value="AAA58435.1"/>
    <property type="molecule type" value="mRNA"/>
</dbReference>
<dbReference type="EMBL" id="BC101777">
    <property type="protein sequence ID" value="AAI01778.1"/>
    <property type="molecule type" value="mRNA"/>
</dbReference>
<dbReference type="EMBL" id="BC112184">
    <property type="protein sequence ID" value="AAI12185.1"/>
    <property type="molecule type" value="mRNA"/>
</dbReference>
<dbReference type="EMBL" id="L13460">
    <property type="protein sequence ID" value="AAA61350.1"/>
    <property type="molecule type" value="Genomic_DNA"/>
</dbReference>
<dbReference type="EMBL" id="M89647">
    <property type="protein sequence ID" value="AAA58423.1"/>
    <property type="molecule type" value="Genomic_DNA"/>
</dbReference>
<dbReference type="CCDS" id="CCDS6171.1"/>
<dbReference type="PIR" id="S29818">
    <property type="entry name" value="JH0659"/>
</dbReference>
<dbReference type="RefSeq" id="NP_000771.2">
    <property type="nucleotide sequence ID" value="NM_000780.4"/>
</dbReference>
<dbReference type="PDB" id="3DAX">
    <property type="method" value="X-ray"/>
    <property type="resolution" value="2.15 A"/>
    <property type="chains" value="A/B=25-503"/>
</dbReference>
<dbReference type="PDB" id="3SN5">
    <property type="method" value="X-ray"/>
    <property type="resolution" value="2.75 A"/>
    <property type="chains" value="A/B=25-503"/>
</dbReference>
<dbReference type="PDB" id="3V8D">
    <property type="method" value="X-ray"/>
    <property type="resolution" value="1.90 A"/>
    <property type="chains" value="A/B=25-503"/>
</dbReference>
<dbReference type="PDBsum" id="3DAX"/>
<dbReference type="PDBsum" id="3SN5"/>
<dbReference type="PDBsum" id="3V8D"/>
<dbReference type="SMR" id="P22680"/>
<dbReference type="FunCoup" id="P22680">
    <property type="interactions" value="254"/>
</dbReference>
<dbReference type="STRING" id="9606.ENSP00000301645"/>
<dbReference type="ChEMBL" id="CHEMBL1851"/>
<dbReference type="DrugBank" id="DB05667">
    <property type="generic name" value="Levoketoconazole"/>
</dbReference>
<dbReference type="GuidetoPHARMACOLOGY" id="1354"/>
<dbReference type="SwissLipids" id="SLP:000001200"/>
<dbReference type="iPTMnet" id="P22680"/>
<dbReference type="PhosphoSitePlus" id="P22680"/>
<dbReference type="BioMuta" id="CYP7A1"/>
<dbReference type="DMDM" id="544084"/>
<dbReference type="jPOST" id="P22680"/>
<dbReference type="MassIVE" id="P22680"/>
<dbReference type="PaxDb" id="9606-ENSP00000301645"/>
<dbReference type="PeptideAtlas" id="P22680"/>
<dbReference type="ProteomicsDB" id="54016"/>
<dbReference type="Antibodypedia" id="2602">
    <property type="antibodies" value="151 antibodies from 30 providers"/>
</dbReference>
<dbReference type="DNASU" id="1581"/>
<dbReference type="Ensembl" id="ENST00000301645.4">
    <property type="protein sequence ID" value="ENSP00000301645.3"/>
    <property type="gene ID" value="ENSG00000167910.4"/>
</dbReference>
<dbReference type="GeneID" id="1581"/>
<dbReference type="KEGG" id="hsa:1581"/>
<dbReference type="MANE-Select" id="ENST00000301645.4">
    <property type="protein sequence ID" value="ENSP00000301645.3"/>
    <property type="RefSeq nucleotide sequence ID" value="NM_000780.4"/>
    <property type="RefSeq protein sequence ID" value="NP_000771.2"/>
</dbReference>
<dbReference type="UCSC" id="uc003xtm.5">
    <property type="organism name" value="human"/>
</dbReference>
<dbReference type="AGR" id="HGNC:2651"/>
<dbReference type="CTD" id="1581"/>
<dbReference type="DisGeNET" id="1581"/>
<dbReference type="GeneCards" id="CYP7A1"/>
<dbReference type="HGNC" id="HGNC:2651">
    <property type="gene designation" value="CYP7A1"/>
</dbReference>
<dbReference type="HPA" id="ENSG00000167910">
    <property type="expression patterns" value="Tissue enriched (liver)"/>
</dbReference>
<dbReference type="MalaCards" id="CYP7A1"/>
<dbReference type="MIM" id="118455">
    <property type="type" value="gene"/>
</dbReference>
<dbReference type="neXtProt" id="NX_P22680"/>
<dbReference type="OpenTargets" id="ENSG00000167910"/>
<dbReference type="Orphanet" id="209902">
    <property type="disease" value="Hypercholesterolemia due to cholesterol 7alpha-hydroxylase deficiency"/>
</dbReference>
<dbReference type="PharmGKB" id="PA132"/>
<dbReference type="VEuPathDB" id="HostDB:ENSG00000167910"/>
<dbReference type="eggNOG" id="KOG0684">
    <property type="taxonomic scope" value="Eukaryota"/>
</dbReference>
<dbReference type="GeneTree" id="ENSGT00940000153141"/>
<dbReference type="HOGENOM" id="CLU_018012_1_3_1"/>
<dbReference type="InParanoid" id="P22680"/>
<dbReference type="OMA" id="MFRTAHN"/>
<dbReference type="OrthoDB" id="6692864at2759"/>
<dbReference type="PAN-GO" id="P22680">
    <property type="GO annotations" value="4 GO annotations based on evolutionary models"/>
</dbReference>
<dbReference type="PhylomeDB" id="P22680"/>
<dbReference type="TreeFam" id="TF105090"/>
<dbReference type="BioCyc" id="MetaCyc:HS09659-MONOMER"/>
<dbReference type="BRENDA" id="1.14.14.23">
    <property type="organism ID" value="2681"/>
</dbReference>
<dbReference type="PathwayCommons" id="P22680"/>
<dbReference type="Reactome" id="R-HSA-192105">
    <property type="pathway name" value="Synthesis of bile acids and bile salts"/>
</dbReference>
<dbReference type="Reactome" id="R-HSA-193368">
    <property type="pathway name" value="Synthesis of bile acids and bile salts via 7alpha-hydroxycholesterol"/>
</dbReference>
<dbReference type="Reactome" id="R-HSA-193807">
    <property type="pathway name" value="Synthesis of bile acids and bile salts via 27-hydroxycholesterol"/>
</dbReference>
<dbReference type="Reactome" id="R-HSA-1989781">
    <property type="pathway name" value="PPARA activates gene expression"/>
</dbReference>
<dbReference type="Reactome" id="R-HSA-211976">
    <property type="pathway name" value="Endogenous sterols"/>
</dbReference>
<dbReference type="SABIO-RK" id="P22680"/>
<dbReference type="SignaLink" id="P22680"/>
<dbReference type="SIGNOR" id="P22680"/>
<dbReference type="UniPathway" id="UPA00221"/>
<dbReference type="UniPathway" id="UPA01058"/>
<dbReference type="BioGRID-ORCS" id="1581">
    <property type="hits" value="14 hits in 1146 CRISPR screens"/>
</dbReference>
<dbReference type="EvolutionaryTrace" id="P22680"/>
<dbReference type="GeneWiki" id="Cholesterol_7_alpha-hydroxylase"/>
<dbReference type="GenomeRNAi" id="1581"/>
<dbReference type="Pharos" id="P22680">
    <property type="development level" value="Tchem"/>
</dbReference>
<dbReference type="PRO" id="PR:P22680"/>
<dbReference type="Proteomes" id="UP000005640">
    <property type="component" value="Chromosome 8"/>
</dbReference>
<dbReference type="RNAct" id="P22680">
    <property type="molecule type" value="protein"/>
</dbReference>
<dbReference type="Bgee" id="ENSG00000167910">
    <property type="expression patterns" value="Expressed in right lobe of liver and 24 other cell types or tissues"/>
</dbReference>
<dbReference type="GO" id="GO:0005789">
    <property type="term" value="C:endoplasmic reticulum membrane"/>
    <property type="evidence" value="ECO:0000304"/>
    <property type="project" value="Reactome"/>
</dbReference>
<dbReference type="GO" id="GO:0043231">
    <property type="term" value="C:intracellular membrane-bounded organelle"/>
    <property type="evidence" value="ECO:0000250"/>
    <property type="project" value="UniProtKB"/>
</dbReference>
<dbReference type="GO" id="GO:0033782">
    <property type="term" value="F:24S-hydroxycholesterol 7-alpha-hydroxylase activity"/>
    <property type="evidence" value="ECO:0007669"/>
    <property type="project" value="UniProtKB-EC"/>
</dbReference>
<dbReference type="GO" id="GO:0008123">
    <property type="term" value="F:cholesterol 7-alpha-monooxygenase activity"/>
    <property type="evidence" value="ECO:0000314"/>
    <property type="project" value="UniProtKB"/>
</dbReference>
<dbReference type="GO" id="GO:0020037">
    <property type="term" value="F:heme binding"/>
    <property type="evidence" value="ECO:0007669"/>
    <property type="project" value="InterPro"/>
</dbReference>
<dbReference type="GO" id="GO:0005506">
    <property type="term" value="F:iron ion binding"/>
    <property type="evidence" value="ECO:0007669"/>
    <property type="project" value="InterPro"/>
</dbReference>
<dbReference type="GO" id="GO:0015721">
    <property type="term" value="P:bile acid and bile salt transport"/>
    <property type="evidence" value="ECO:0007669"/>
    <property type="project" value="Ensembl"/>
</dbReference>
<dbReference type="GO" id="GO:0006699">
    <property type="term" value="P:bile acid biosynthetic process"/>
    <property type="evidence" value="ECO:0000314"/>
    <property type="project" value="UniProtKB"/>
</dbReference>
<dbReference type="GO" id="GO:0071397">
    <property type="term" value="P:cellular response to cholesterol"/>
    <property type="evidence" value="ECO:0000250"/>
    <property type="project" value="UniProtKB"/>
</dbReference>
<dbReference type="GO" id="GO:0071333">
    <property type="term" value="P:cellular response to glucose stimulus"/>
    <property type="evidence" value="ECO:0000314"/>
    <property type="project" value="UniProtKB"/>
</dbReference>
<dbReference type="GO" id="GO:0006707">
    <property type="term" value="P:cholesterol catabolic process"/>
    <property type="evidence" value="ECO:0000250"/>
    <property type="project" value="UniProtKB"/>
</dbReference>
<dbReference type="GO" id="GO:0042632">
    <property type="term" value="P:cholesterol homeostasis"/>
    <property type="evidence" value="ECO:0000250"/>
    <property type="project" value="UniProtKB"/>
</dbReference>
<dbReference type="GO" id="GO:0032966">
    <property type="term" value="P:negative regulation of collagen biosynthetic process"/>
    <property type="evidence" value="ECO:0007669"/>
    <property type="project" value="Ensembl"/>
</dbReference>
<dbReference type="GO" id="GO:0045717">
    <property type="term" value="P:negative regulation of fatty acid biosynthetic process"/>
    <property type="evidence" value="ECO:0007669"/>
    <property type="project" value="Ensembl"/>
</dbReference>
<dbReference type="GO" id="GO:0045542">
    <property type="term" value="P:positive regulation of cholesterol biosynthetic process"/>
    <property type="evidence" value="ECO:0007669"/>
    <property type="project" value="Ensembl"/>
</dbReference>
<dbReference type="GO" id="GO:0070857">
    <property type="term" value="P:regulation of bile acid biosynthetic process"/>
    <property type="evidence" value="ECO:0000314"/>
    <property type="project" value="UniProtKB"/>
</dbReference>
<dbReference type="GO" id="GO:0045471">
    <property type="term" value="P:response to ethanol"/>
    <property type="evidence" value="ECO:0007669"/>
    <property type="project" value="Ensembl"/>
</dbReference>
<dbReference type="GO" id="GO:0016125">
    <property type="term" value="P:sterol metabolic process"/>
    <property type="evidence" value="ECO:0000304"/>
    <property type="project" value="Reactome"/>
</dbReference>
<dbReference type="CDD" id="cd20631">
    <property type="entry name" value="CYP7A1"/>
    <property type="match status" value="1"/>
</dbReference>
<dbReference type="FunFam" id="1.10.630.10:FF:000034">
    <property type="entry name" value="Cholesterol 7-alpha-monooxygenase"/>
    <property type="match status" value="1"/>
</dbReference>
<dbReference type="Gene3D" id="1.10.630.10">
    <property type="entry name" value="Cytochrome P450"/>
    <property type="match status" value="1"/>
</dbReference>
<dbReference type="InterPro" id="IPR030681">
    <property type="entry name" value="Cholesterol_7a_monooxygenase"/>
</dbReference>
<dbReference type="InterPro" id="IPR050529">
    <property type="entry name" value="CYP450_sterol_14alpha_dmase"/>
</dbReference>
<dbReference type="InterPro" id="IPR001128">
    <property type="entry name" value="Cyt_P450"/>
</dbReference>
<dbReference type="InterPro" id="IPR017972">
    <property type="entry name" value="Cyt_P450_CS"/>
</dbReference>
<dbReference type="InterPro" id="IPR024204">
    <property type="entry name" value="Cyt_P450_CYP7A1-type"/>
</dbReference>
<dbReference type="InterPro" id="IPR002403">
    <property type="entry name" value="Cyt_P450_E_grp-IV"/>
</dbReference>
<dbReference type="InterPro" id="IPR036396">
    <property type="entry name" value="Cyt_P450_sf"/>
</dbReference>
<dbReference type="PANTHER" id="PTHR24304:SF1">
    <property type="entry name" value="CYTOCHROME P450 7A1"/>
    <property type="match status" value="1"/>
</dbReference>
<dbReference type="PANTHER" id="PTHR24304">
    <property type="entry name" value="CYTOCHROME P450 FAMILY 7"/>
    <property type="match status" value="1"/>
</dbReference>
<dbReference type="Pfam" id="PF00067">
    <property type="entry name" value="p450"/>
    <property type="match status" value="1"/>
</dbReference>
<dbReference type="PIRSF" id="PIRSF500625">
    <property type="entry name" value="Cytochrome_CYP7A1"/>
    <property type="match status" value="1"/>
</dbReference>
<dbReference type="PIRSF" id="PIRSF000047">
    <property type="entry name" value="Cytochrome_CYPVIIA1"/>
    <property type="match status" value="1"/>
</dbReference>
<dbReference type="PRINTS" id="PR00465">
    <property type="entry name" value="EP450IV"/>
</dbReference>
<dbReference type="SUPFAM" id="SSF48264">
    <property type="entry name" value="Cytochrome P450"/>
    <property type="match status" value="1"/>
</dbReference>
<dbReference type="PROSITE" id="PS00086">
    <property type="entry name" value="CYTOCHROME_P450"/>
    <property type="match status" value="1"/>
</dbReference>
<name>CP7A1_HUMAN</name>
<reference key="1">
    <citation type="journal article" date="1993" name="Biochim. Biophys. Acta">
        <title>Structure of the gene encoding human liver cholesterol 7 alpha-hydroxylase.</title>
        <authorList>
            <person name="Nishimoto M."/>
            <person name="Noshiro M."/>
            <person name="Okuda K."/>
        </authorList>
    </citation>
    <scope>NUCLEOTIDE SEQUENCE [GENOMIC DNA]</scope>
</reference>
<reference key="2">
    <citation type="journal article" date="1990" name="FEBS Lett.">
        <title>Molecular cloning and sequence analysis of cDNA encoding human cholesterol 7 alpha-hydroxylase.</title>
        <authorList>
            <person name="Noshiro M."/>
            <person name="Okuda K."/>
        </authorList>
    </citation>
    <scope>NUCLEOTIDE SEQUENCE [MRNA]</scope>
    <scope>CATALYTIC ACTIVITY</scope>
    <scope>VARIANT ASN-347</scope>
    <scope>FUNCTION</scope>
    <scope>PATHWAY</scope>
    <scope>SUBCELLULAR LOCATION</scope>
</reference>
<reference key="3">
    <citation type="journal article" date="1992" name="Biochem. Biophys. Res. Commun.">
        <title>Polymorphisms of human cholesterol 7 alpha-hydroxylase.</title>
        <authorList>
            <person name="Karam W.G."/>
            <person name="Chiang J.Y."/>
        </authorList>
    </citation>
    <scope>NUCLEOTIDE SEQUENCE [MRNA]</scope>
    <scope>VARIANT SER-100</scope>
</reference>
<reference key="4">
    <citation type="journal article" date="2004" name="Genome Res.">
        <title>The status, quality, and expansion of the NIH full-length cDNA project: the Mammalian Gene Collection (MGC).</title>
        <authorList>
            <consortium name="The MGC Project Team"/>
        </authorList>
    </citation>
    <scope>NUCLEOTIDE SEQUENCE [LARGE SCALE MRNA]</scope>
    <source>
        <tissue>Liver</tissue>
    </source>
</reference>
<reference key="5">
    <citation type="journal article" date="1994" name="Genomics">
        <title>Structure and nucleotide sequences of the human cholesterol 7 alpha-hydroxylase gene (CYP7).</title>
        <authorList>
            <person name="Wang D.P."/>
            <person name="Chiang J.Y."/>
        </authorList>
    </citation>
    <scope>NUCLEOTIDE SEQUENCE [GENOMIC DNA] OF 1-140</scope>
    <source>
        <tissue>Placenta</tissue>
    </source>
</reference>
<reference key="6">
    <citation type="journal article" date="1992" name="Biochemistry">
        <title>Transcriptional regulation of the human cholesterol 7 alpha-hydroxylase gene.</title>
        <authorList>
            <person name="Molowa D.T."/>
            <person name="Chen W.S."/>
            <person name="Cimis G.M."/>
            <person name="Tan C.P."/>
        </authorList>
    </citation>
    <scope>NUCLEOTIDE SEQUENCE [GENOMIC DNA] OF 1-25</scope>
</reference>
<reference key="7">
    <citation type="journal article" date="2000" name="J. Lipid Res.">
        <title>24-hydroxycholesterol is a substrate for hepatic cholesterol 7alpha-hydroxylase (CYP7A).</title>
        <authorList>
            <person name="Norlin M."/>
            <person name="Toll A."/>
            <person name="Bjoerkhem I."/>
            <person name="Wikvall K."/>
        </authorList>
    </citation>
    <scope>FUNCTION</scope>
    <scope>CATALYTIC ACTIVITY</scope>
    <scope>BIOPHYSICOCHEMICAL PROPERTIES</scope>
    <scope>PATHWAY</scope>
    <scope>SUBCELLULAR LOCATION</scope>
</reference>
<reference key="8">
    <citation type="journal article" date="2002" name="J. Biol. Chem.">
        <title>Metabolism of 4 beta -hydroxycholesterol in humans.</title>
        <authorList>
            <person name="Bodin K."/>
            <person name="Andersson U."/>
            <person name="Rystedt E."/>
            <person name="Ellis E."/>
            <person name="Norlin M."/>
            <person name="Pikuleva I."/>
            <person name="Eggertsen G."/>
            <person name="Bjoerkhem I."/>
            <person name="Diczfalusy U."/>
        </authorList>
    </citation>
    <scope>FUNCTION</scope>
    <scope>CATALYTIC ACTIVITY</scope>
    <scope>BIOPHYSICOCHEMICAL PROPERTIES</scope>
    <scope>PATHWAY</scope>
</reference>
<reference key="9">
    <citation type="journal article" date="2005" name="Biochem. Biophys. Res. Commun.">
        <title>Feedback regulation of bile acid synthesis in human liver: importance of HNF-4alpha for regulation of CYP7A1.</title>
        <authorList>
            <person name="Abrahamsson A."/>
            <person name="Gustafsson U."/>
            <person name="Ellis E."/>
            <person name="Nilsson L.M."/>
            <person name="Sahlin S."/>
            <person name="Bjorkhem I."/>
            <person name="Einarsson C."/>
        </authorList>
    </citation>
    <scope>INDUCTION BY CHENODEOXYCHOLIC ACID AND CHOLESTYRAMINE</scope>
    <scope>TISSUE SPECIFICITY</scope>
</reference>
<reference key="10">
    <citation type="journal article" date="2010" name="J. Lipid Res.">
        <title>Glucose stimulates cholesterol 7alpha-hydroxylase gene transcription in human hepatocytes.</title>
        <authorList>
            <person name="Li T."/>
            <person name="Chanda D."/>
            <person name="Zhang Y."/>
            <person name="Choi H.S."/>
            <person name="Chiang J.Y."/>
        </authorList>
    </citation>
    <scope>INDUCTION BY GLUCOSE</scope>
    <scope>FUNCTION</scope>
</reference>
<reference key="11">
    <citation type="journal article" date="2011" name="J. Biol. Chem.">
        <title>Conversion of 7-dehydrocholesterol to 7-ketocholesterol is catalyzed by human cytochrome P450 7A1 and occurs by direct oxidation without an epoxide intermediate.</title>
        <authorList>
            <person name="Shinkyo R."/>
            <person name="Xu L."/>
            <person name="Tallman K.A."/>
            <person name="Cheng Q."/>
            <person name="Porter N.A."/>
            <person name="Guengerich F.P."/>
        </authorList>
    </citation>
    <scope>FUNCTION</scope>
    <scope>CATALYTIC ACTIVITY</scope>
    <scope>BIOPHYSICOCHEMICAL PROPERTIES</scope>
</reference>
<reference key="12">
    <citation type="submission" date="2009-02" db="PDB data bank">
        <title>Crystal structure of human CYP7A1.</title>
        <authorList>
            <consortium name="Structural genomics consortium (SGC)"/>
        </authorList>
    </citation>
    <scope>X-RAY CRYSTALLOGRAPHY (2.15 ANGSTROMS) IN COMPLEX WITH HEME</scope>
    <scope>COFACTOR</scope>
</reference>
<reference key="13">
    <citation type="journal article" date="2003" name="J. Hum. Genet.">
        <title>Catalog of 680 variations among eight cytochrome p450 (CYP) genes, nine esterase genes, and two other genes in the Japanese population.</title>
        <authorList>
            <person name="Saito S."/>
            <person name="Iida A."/>
            <person name="Sekine A."/>
            <person name="Kawauchi S."/>
            <person name="Higuchi S."/>
            <person name="Ogawa C."/>
            <person name="Nakamura Y."/>
        </authorList>
    </citation>
    <scope>VARIANTS SER-233 AND ASN-347</scope>
</reference>
<accession>P22680</accession>
<accession>P78454</accession>
<accession>Q3MIL8</accession>
<accession>Q7KZ19</accession>
<organism>
    <name type="scientific">Homo sapiens</name>
    <name type="common">Human</name>
    <dbReference type="NCBI Taxonomy" id="9606"/>
    <lineage>
        <taxon>Eukaryota</taxon>
        <taxon>Metazoa</taxon>
        <taxon>Chordata</taxon>
        <taxon>Craniata</taxon>
        <taxon>Vertebrata</taxon>
        <taxon>Euteleostomi</taxon>
        <taxon>Mammalia</taxon>
        <taxon>Eutheria</taxon>
        <taxon>Euarchontoglires</taxon>
        <taxon>Primates</taxon>
        <taxon>Haplorrhini</taxon>
        <taxon>Catarrhini</taxon>
        <taxon>Hominidae</taxon>
        <taxon>Homo</taxon>
    </lineage>
</organism>
<feature type="chain" id="PRO_0000051901" description="Cytochrome P450 7A1">
    <location>
        <begin position="1"/>
        <end position="504"/>
    </location>
</feature>
<feature type="transmembrane region" description="Helical" evidence="1">
    <location>
        <begin position="4"/>
        <end position="24"/>
    </location>
</feature>
<feature type="binding site" description="axial binding residue" evidence="20">
    <location>
        <position position="444"/>
    </location>
    <ligand>
        <name>heme</name>
        <dbReference type="ChEBI" id="CHEBI:30413"/>
    </ligand>
    <ligandPart>
        <name>Fe</name>
        <dbReference type="ChEBI" id="CHEBI:18248"/>
    </ligandPart>
</feature>
<feature type="sequence variant" id="VAR_059152" description="In dbSNP:rs62621283.">
    <original>H</original>
    <variation>N</variation>
    <location>
        <position position="86"/>
    </location>
</feature>
<feature type="sequence variant" id="VAR_001259" description="In dbSNP:rs200836103." evidence="6">
    <original>F</original>
    <variation>S</variation>
    <location>
        <position position="100"/>
    </location>
</feature>
<feature type="sequence variant" id="VAR_018376" description="In dbSNP:rs8192874." evidence="4">
    <original>N</original>
    <variation>S</variation>
    <location>
        <position position="233"/>
    </location>
</feature>
<feature type="sequence variant" id="VAR_018377" description="In dbSNP:rs8192875." evidence="4 9">
    <original>D</original>
    <variation>N</variation>
    <location>
        <position position="347"/>
    </location>
</feature>
<feature type="sequence conflict" description="In Ref. 2; CAA39568." evidence="14" ref="2">
    <original>D</original>
    <variation>S</variation>
    <location>
        <position position="385"/>
    </location>
</feature>
<feature type="strand" evidence="22">
    <location>
        <begin position="34"/>
        <end position="41"/>
    </location>
</feature>
<feature type="turn" evidence="22">
    <location>
        <begin position="42"/>
        <end position="45"/>
    </location>
</feature>
<feature type="helix" evidence="22">
    <location>
        <begin position="46"/>
        <end position="48"/>
    </location>
</feature>
<feature type="helix" evidence="22">
    <location>
        <begin position="52"/>
        <end position="63"/>
    </location>
</feature>
<feature type="strand" evidence="22">
    <location>
        <begin position="65"/>
        <end position="71"/>
    </location>
</feature>
<feature type="strand" evidence="22">
    <location>
        <begin position="74"/>
        <end position="79"/>
    </location>
</feature>
<feature type="helix" evidence="22">
    <location>
        <begin position="82"/>
        <end position="84"/>
    </location>
</feature>
<feature type="helix" evidence="22">
    <location>
        <begin position="85"/>
        <end position="89"/>
    </location>
</feature>
<feature type="strand" evidence="22">
    <location>
        <begin position="95"/>
        <end position="98"/>
    </location>
</feature>
<feature type="helix" evidence="22">
    <location>
        <begin position="99"/>
        <end position="109"/>
    </location>
</feature>
<feature type="helix" evidence="22">
    <location>
        <begin position="116"/>
        <end position="118"/>
    </location>
</feature>
<feature type="strand" evidence="22">
    <location>
        <begin position="119"/>
        <end position="121"/>
    </location>
</feature>
<feature type="helix" evidence="22">
    <location>
        <begin position="125"/>
        <end position="133"/>
    </location>
</feature>
<feature type="helix" evidence="22">
    <location>
        <begin position="135"/>
        <end position="153"/>
    </location>
</feature>
<feature type="helix" evidence="22">
    <location>
        <begin position="160"/>
        <end position="163"/>
    </location>
</feature>
<feature type="strand" evidence="22">
    <location>
        <begin position="167"/>
        <end position="170"/>
    </location>
</feature>
<feature type="helix" evidence="22">
    <location>
        <begin position="171"/>
        <end position="188"/>
    </location>
</feature>
<feature type="helix" evidence="22">
    <location>
        <begin position="195"/>
        <end position="197"/>
    </location>
</feature>
<feature type="helix" evidence="22">
    <location>
        <begin position="198"/>
        <end position="220"/>
    </location>
</feature>
<feature type="helix" evidence="22">
    <location>
        <begin position="225"/>
        <end position="227"/>
    </location>
</feature>
<feature type="helix" evidence="22">
    <location>
        <begin position="229"/>
        <end position="241"/>
    </location>
</feature>
<feature type="helix" evidence="22">
    <location>
        <begin position="244"/>
        <end position="247"/>
    </location>
</feature>
<feature type="helix" evidence="22">
    <location>
        <begin position="255"/>
        <end position="267"/>
    </location>
</feature>
<feature type="helix" evidence="22">
    <location>
        <begin position="272"/>
        <end position="287"/>
    </location>
</feature>
<feature type="helix" evidence="22">
    <location>
        <begin position="290"/>
        <end position="303"/>
    </location>
</feature>
<feature type="helix" evidence="22">
    <location>
        <begin position="305"/>
        <end position="321"/>
    </location>
</feature>
<feature type="strand" evidence="22">
    <location>
        <begin position="328"/>
        <end position="331"/>
    </location>
</feature>
<feature type="helix" evidence="22">
    <location>
        <begin position="337"/>
        <end position="341"/>
    </location>
</feature>
<feature type="helix" evidence="22">
    <location>
        <begin position="344"/>
        <end position="357"/>
    </location>
</feature>
<feature type="strand" evidence="22">
    <location>
        <begin position="358"/>
        <end position="360"/>
    </location>
</feature>
<feature type="strand" evidence="22">
    <location>
        <begin position="362"/>
        <end position="373"/>
    </location>
</feature>
<feature type="strand" evidence="22">
    <location>
        <begin position="378"/>
        <end position="381"/>
    </location>
</feature>
<feature type="strand" evidence="22">
    <location>
        <begin position="386"/>
        <end position="389"/>
    </location>
</feature>
<feature type="helix" evidence="22">
    <location>
        <begin position="392"/>
        <end position="395"/>
    </location>
</feature>
<feature type="turn" evidence="22">
    <location>
        <begin position="398"/>
        <end position="400"/>
    </location>
</feature>
<feature type="strand" evidence="22">
    <location>
        <begin position="401"/>
        <end position="403"/>
    </location>
</feature>
<feature type="turn" evidence="22">
    <location>
        <begin position="409"/>
        <end position="412"/>
    </location>
</feature>
<feature type="strand" evidence="22">
    <location>
        <begin position="417"/>
        <end position="419"/>
    </location>
</feature>
<feature type="helix" evidence="22">
    <location>
        <begin position="447"/>
        <end position="464"/>
    </location>
</feature>
<feature type="strand" evidence="22">
    <location>
        <begin position="465"/>
        <end position="469"/>
    </location>
</feature>
<feature type="turn" evidence="21">
    <location>
        <begin position="470"/>
        <end position="473"/>
    </location>
</feature>
<feature type="helix" evidence="22">
    <location>
        <begin position="481"/>
        <end position="483"/>
    </location>
</feature>
<feature type="strand" evidence="22">
    <location>
        <begin position="485"/>
        <end position="488"/>
    </location>
</feature>
<feature type="strand" evidence="22">
    <location>
        <begin position="491"/>
        <end position="493"/>
    </location>
</feature>
<feature type="strand" evidence="22">
    <location>
        <begin position="496"/>
        <end position="501"/>
    </location>
</feature>
<protein>
    <recommendedName>
        <fullName evidence="13">Cytochrome P450 7A1</fullName>
    </recommendedName>
    <alternativeName>
        <fullName evidence="15">24-hydroxycholesterol 7-alpha-hydroxylase</fullName>
        <ecNumber evidence="2">1.14.14.26</ecNumber>
    </alternativeName>
    <alternativeName>
        <fullName>CYPVII</fullName>
    </alternativeName>
    <alternativeName>
        <fullName evidence="11">Cholesterol 7-alpha-hydroxylase</fullName>
    </alternativeName>
    <alternativeName>
        <fullName>Cholesterol 7-alpha-monooxygenase</fullName>
        <ecNumber evidence="9">1.14.14.23</ecNumber>
    </alternativeName>
</protein>
<comment type="function">
    <text evidence="2 3 7 8 9">A cytochrome P450 monooxygenase involved in the metabolism of endogenous cholesterol and its oxygenated derivatives (oxysterols) (PubMed:11013305, PubMed:12077124, PubMed:19965590, PubMed:21813643, PubMed:2384150). Mechanistically, uses molecular oxygen inserting one oxygen atom into a substrate, and reducing the second into a water molecule, with two electrons provided by NADPH via cytochrome P450 reductase (CPR; NADPH-ferrihemoprotein reductase) (PubMed:11013305, PubMed:12077124, PubMed:19965590, PubMed:21813643, PubMed:2384150). Functions as a critical regulatory enzyme of bile acid biosynthesis and cholesterol homeostasis. Catalyzes the hydroxylation of carbon hydrogen bond at 7-alpha position of cholesterol, a rate-limiting step in cholesterol catabolism and bile acid biosynthesis (PubMed:12077124, PubMed:19965590, PubMed:2384150). 7-alpha hydroxylates several oxysterols, including 4beta-hydroxycholesterol and 24-hydroxycholesterol (PubMed:11013305, PubMed:12077124). Catalyzes the oxidation of the 7,8 double bond of 7-dehydrocholesterol and lathosterol with direct and predominant formation of the 7-keto derivatives (PubMed:21813643).</text>
</comment>
<comment type="catalytic activity">
    <reaction evidence="2 3 9">
        <text>cholesterol + reduced [NADPH--hemoprotein reductase] + O2 = 7alpha-hydroxycholesterol + oxidized [NADPH--hemoprotein reductase] + H2O + H(+)</text>
        <dbReference type="Rhea" id="RHEA:21812"/>
        <dbReference type="Rhea" id="RHEA-COMP:11964"/>
        <dbReference type="Rhea" id="RHEA-COMP:11965"/>
        <dbReference type="ChEBI" id="CHEBI:15377"/>
        <dbReference type="ChEBI" id="CHEBI:15378"/>
        <dbReference type="ChEBI" id="CHEBI:15379"/>
        <dbReference type="ChEBI" id="CHEBI:16113"/>
        <dbReference type="ChEBI" id="CHEBI:17500"/>
        <dbReference type="ChEBI" id="CHEBI:57618"/>
        <dbReference type="ChEBI" id="CHEBI:58210"/>
        <dbReference type="EC" id="1.14.14.23"/>
    </reaction>
    <physiologicalReaction direction="left-to-right" evidence="15 16 18">
        <dbReference type="Rhea" id="RHEA:21813"/>
    </physiologicalReaction>
</comment>
<comment type="catalytic activity">
    <reaction evidence="3">
        <text>4beta-hydroxycholesterol + reduced [NADPH--hemoprotein reductase] + O2 = 4beta,7alpha-dihydroxycholesterol + oxidized [NADPH--hemoprotein reductase] + H2O + H(+)</text>
        <dbReference type="Rhea" id="RHEA:46120"/>
        <dbReference type="Rhea" id="RHEA-COMP:11964"/>
        <dbReference type="Rhea" id="RHEA-COMP:11965"/>
        <dbReference type="ChEBI" id="CHEBI:15377"/>
        <dbReference type="ChEBI" id="CHEBI:15378"/>
        <dbReference type="ChEBI" id="CHEBI:15379"/>
        <dbReference type="ChEBI" id="CHEBI:57618"/>
        <dbReference type="ChEBI" id="CHEBI:58210"/>
        <dbReference type="ChEBI" id="CHEBI:85778"/>
        <dbReference type="ChEBI" id="CHEBI:85779"/>
    </reaction>
    <physiologicalReaction direction="left-to-right" evidence="16">
        <dbReference type="Rhea" id="RHEA:46121"/>
    </physiologicalReaction>
</comment>
<comment type="catalytic activity">
    <reaction evidence="8">
        <text>lathosterol + reduced [NADPH--hemoprotein reductase] + O2 = 7alpha,8alpha-epoxy-5alpha-cholestan-3beta-ol + oxidized [NADPH--hemoprotein reductase] + H2O + H(+)</text>
        <dbReference type="Rhea" id="RHEA:53256"/>
        <dbReference type="Rhea" id="RHEA-COMP:11964"/>
        <dbReference type="Rhea" id="RHEA-COMP:11965"/>
        <dbReference type="ChEBI" id="CHEBI:15377"/>
        <dbReference type="ChEBI" id="CHEBI:15378"/>
        <dbReference type="ChEBI" id="CHEBI:15379"/>
        <dbReference type="ChEBI" id="CHEBI:17168"/>
        <dbReference type="ChEBI" id="CHEBI:57618"/>
        <dbReference type="ChEBI" id="CHEBI:58210"/>
        <dbReference type="ChEBI" id="CHEBI:137063"/>
    </reaction>
    <physiologicalReaction direction="left-to-right" evidence="17">
        <dbReference type="Rhea" id="RHEA:53257"/>
    </physiologicalReaction>
</comment>
<comment type="catalytic activity">
    <reaction evidence="8">
        <text>lathosterol + reduced [NADPH--hemoprotein reductase] + O2 = 5alpha-cholestan-7-oxo-3beta-ol + oxidized [NADPH--hemoprotein reductase] + H2O + H(+)</text>
        <dbReference type="Rhea" id="RHEA:53252"/>
        <dbReference type="Rhea" id="RHEA-COMP:11964"/>
        <dbReference type="Rhea" id="RHEA-COMP:11965"/>
        <dbReference type="ChEBI" id="CHEBI:15377"/>
        <dbReference type="ChEBI" id="CHEBI:15378"/>
        <dbReference type="ChEBI" id="CHEBI:15379"/>
        <dbReference type="ChEBI" id="CHEBI:17168"/>
        <dbReference type="ChEBI" id="CHEBI:57618"/>
        <dbReference type="ChEBI" id="CHEBI:58210"/>
        <dbReference type="ChEBI" id="CHEBI:137062"/>
    </reaction>
    <physiologicalReaction direction="left-to-right" evidence="17">
        <dbReference type="Rhea" id="RHEA:53253"/>
    </physiologicalReaction>
</comment>
<comment type="catalytic activity">
    <reaction evidence="8">
        <text>7-dehydrocholesterol + reduced [NADPH--hemoprotein reductase] + O2 = 7-oxocholesterol + oxidized [NADPH--hemoprotein reductase] + H2O + H(+)</text>
        <dbReference type="Rhea" id="RHEA:53248"/>
        <dbReference type="Rhea" id="RHEA-COMP:11964"/>
        <dbReference type="Rhea" id="RHEA-COMP:11965"/>
        <dbReference type="ChEBI" id="CHEBI:15377"/>
        <dbReference type="ChEBI" id="CHEBI:15378"/>
        <dbReference type="ChEBI" id="CHEBI:15379"/>
        <dbReference type="ChEBI" id="CHEBI:17759"/>
        <dbReference type="ChEBI" id="CHEBI:57618"/>
        <dbReference type="ChEBI" id="CHEBI:58210"/>
        <dbReference type="ChEBI" id="CHEBI:64294"/>
    </reaction>
    <physiologicalReaction direction="left-to-right" evidence="17">
        <dbReference type="Rhea" id="RHEA:53249"/>
    </physiologicalReaction>
</comment>
<comment type="catalytic activity">
    <reaction evidence="2">
        <text>(24S)-hydroxycholesterol + reduced [NADPH--hemoprotein reductase] + O2 = (24S)-7alpha-dihydroxycholesterol + oxidized [NADPH--hemoprotein reductase] + H2O + H(+)</text>
        <dbReference type="Rhea" id="RHEA:46124"/>
        <dbReference type="Rhea" id="RHEA-COMP:11964"/>
        <dbReference type="Rhea" id="RHEA-COMP:11965"/>
        <dbReference type="ChEBI" id="CHEBI:15377"/>
        <dbReference type="ChEBI" id="CHEBI:15378"/>
        <dbReference type="ChEBI" id="CHEBI:15379"/>
        <dbReference type="ChEBI" id="CHEBI:34310"/>
        <dbReference type="ChEBI" id="CHEBI:37640"/>
        <dbReference type="ChEBI" id="CHEBI:57618"/>
        <dbReference type="ChEBI" id="CHEBI:58210"/>
        <dbReference type="EC" id="1.14.14.26"/>
    </reaction>
    <physiologicalReaction direction="left-to-right" evidence="15">
        <dbReference type="Rhea" id="RHEA:46125"/>
    </physiologicalReaction>
</comment>
<comment type="catalytic activity">
    <reaction evidence="2">
        <text>(24R)-hydroxycholesterol + reduced [NADPH--hemoprotein reductase] + O2 = (24R)-7alpha-dihydroxycholesterol + oxidized [NADPH--hemoprotein reductase] + H2O + H(+)</text>
        <dbReference type="Rhea" id="RHEA:16093"/>
        <dbReference type="Rhea" id="RHEA-COMP:11964"/>
        <dbReference type="Rhea" id="RHEA-COMP:11965"/>
        <dbReference type="ChEBI" id="CHEBI:15377"/>
        <dbReference type="ChEBI" id="CHEBI:15378"/>
        <dbReference type="ChEBI" id="CHEBI:15379"/>
        <dbReference type="ChEBI" id="CHEBI:50516"/>
        <dbReference type="ChEBI" id="CHEBI:50518"/>
        <dbReference type="ChEBI" id="CHEBI:57618"/>
        <dbReference type="ChEBI" id="CHEBI:58210"/>
    </reaction>
    <physiologicalReaction direction="left-to-right" evidence="15">
        <dbReference type="Rhea" id="RHEA:16094"/>
    </physiologicalReaction>
</comment>
<comment type="cofactor">
    <cofactor evidence="10">
        <name>heme</name>
        <dbReference type="ChEBI" id="CHEBI:30413"/>
    </cofactor>
</comment>
<comment type="biophysicochemical properties">
    <kinetics>
        <KM evidence="2">3 uM for cholesterol</KM>
        <KM evidence="2">6 uM for 24-hydroxycholesterol</KM>
        <KM evidence="8">1.8 uM for 5alpha-cholest-7-en-3beta-ol (lathosterol)</KM>
        <KM evidence="8">1.1 uM for cholesta-5,7-dien-3beta-ol (7-dehydrocholesterol)</KM>
        <Vmax evidence="3">0.184 nmol/min/nmol enzyme toward cholesterol</Vmax>
        <Vmax evidence="3">0.087 nmol/min/nmol enzyme toward 4beta-hydroxycholesterol</Vmax>
        <text evidence="8">kcat is 3.7 min(-1) with 5alpha-cholest-7-en-3beta-ol (lathosterol) as substrate. kcat is 2.2 min(-1) with cholesta-5,7-dien-3beta-ol (7-dehydrocholesterol) as substrate.</text>
    </kinetics>
</comment>
<comment type="pathway">
    <text evidence="15 16 18">Lipid metabolism; bile acid biosynthesis.</text>
</comment>
<comment type="pathway">
    <text evidence="15 16 18">Steroid metabolism; cholesterol degradation.</text>
</comment>
<comment type="subcellular location">
    <subcellularLocation>
        <location evidence="15 18">Endoplasmic reticulum membrane</location>
        <topology evidence="14">Single-pass membrane protein</topology>
    </subcellularLocation>
    <subcellularLocation>
        <location evidence="15 18">Microsome membrane</location>
        <topology evidence="14">Single-pass membrane protein</topology>
    </subcellularLocation>
</comment>
<comment type="tissue specificity">
    <text evidence="5">Detected in liver.</text>
</comment>
<comment type="induction">
    <text evidence="5 7">Up-regulated by glucose and by cholestyramine. Down-regulated by chenodeoxycholic acid.</text>
</comment>
<comment type="similarity">
    <text evidence="14">Belongs to the cytochrome P450 family.</text>
</comment>
<comment type="online information" name="Wikipedia">
    <link uri="https://en.wikipedia.org/wiki/Cholesterol_7_alpha-hydroxylase"/>
    <text>Cholesterol-7 alpha-hydroxylase entry</text>
</comment>
<comment type="online information" name="Atlas of Genetics and Cytogenetics in Oncology and Haematology">
    <link uri="https://atlasgeneticsoncology.org/gene/40254/CYP7A1"/>
</comment>
<proteinExistence type="evidence at protein level"/>
<gene>
    <name evidence="12 19" type="primary">CYP7A1</name>
    <name type="synonym">CYP7</name>
</gene>
<keyword id="KW-0002">3D-structure</keyword>
<keyword id="KW-0153">Cholesterol metabolism</keyword>
<keyword id="KW-0256">Endoplasmic reticulum</keyword>
<keyword id="KW-0349">Heme</keyword>
<keyword id="KW-0408">Iron</keyword>
<keyword id="KW-0443">Lipid metabolism</keyword>
<keyword id="KW-0472">Membrane</keyword>
<keyword id="KW-0479">Metal-binding</keyword>
<keyword id="KW-0492">Microsome</keyword>
<keyword id="KW-0503">Monooxygenase</keyword>
<keyword id="KW-0560">Oxidoreductase</keyword>
<keyword id="KW-1267">Proteomics identification</keyword>
<keyword id="KW-1185">Reference proteome</keyword>
<keyword id="KW-0753">Steroid metabolism</keyword>
<keyword id="KW-1207">Sterol metabolism</keyword>
<keyword id="KW-0812">Transmembrane</keyword>
<keyword id="KW-1133">Transmembrane helix</keyword>